<protein>
    <recommendedName>
        <fullName evidence="1">UDP-N-acetylmuramoylalanine--D-glutamate ligase</fullName>
        <ecNumber evidence="1">6.3.2.9</ecNumber>
    </recommendedName>
    <alternativeName>
        <fullName evidence="1">D-glutamic acid-adding enzyme</fullName>
    </alternativeName>
    <alternativeName>
        <fullName evidence="1">UDP-N-acetylmuramoyl-L-alanyl-D-glutamate synthetase</fullName>
    </alternativeName>
</protein>
<reference key="1">
    <citation type="journal article" date="2005" name="J. Bacteriol.">
        <title>Whole-genome sequencing of Staphylococcus haemolyticus uncovers the extreme plasticity of its genome and the evolution of human-colonizing staphylococcal species.</title>
        <authorList>
            <person name="Takeuchi F."/>
            <person name="Watanabe S."/>
            <person name="Baba T."/>
            <person name="Yuzawa H."/>
            <person name="Ito T."/>
            <person name="Morimoto Y."/>
            <person name="Kuroda M."/>
            <person name="Cui L."/>
            <person name="Takahashi M."/>
            <person name="Ankai A."/>
            <person name="Baba S."/>
            <person name="Fukui S."/>
            <person name="Lee J.C."/>
            <person name="Hiramatsu K."/>
        </authorList>
    </citation>
    <scope>NUCLEOTIDE SEQUENCE [LARGE SCALE GENOMIC DNA]</scope>
    <source>
        <strain>JCSC1435</strain>
    </source>
</reference>
<keyword id="KW-0067">ATP-binding</keyword>
<keyword id="KW-0131">Cell cycle</keyword>
<keyword id="KW-0132">Cell division</keyword>
<keyword id="KW-0133">Cell shape</keyword>
<keyword id="KW-0961">Cell wall biogenesis/degradation</keyword>
<keyword id="KW-0963">Cytoplasm</keyword>
<keyword id="KW-0436">Ligase</keyword>
<keyword id="KW-0547">Nucleotide-binding</keyword>
<keyword id="KW-0573">Peptidoglycan synthesis</keyword>
<dbReference type="EC" id="6.3.2.9" evidence="1"/>
<dbReference type="EMBL" id="AP006716">
    <property type="protein sequence ID" value="BAE05041.1"/>
    <property type="molecule type" value="Genomic_DNA"/>
</dbReference>
<dbReference type="RefSeq" id="WP_011276017.1">
    <property type="nucleotide sequence ID" value="NC_007168.1"/>
</dbReference>
<dbReference type="SMR" id="Q4L5N4"/>
<dbReference type="GeneID" id="93781110"/>
<dbReference type="KEGG" id="sha:SH1732"/>
<dbReference type="eggNOG" id="COG0771">
    <property type="taxonomic scope" value="Bacteria"/>
</dbReference>
<dbReference type="HOGENOM" id="CLU_032540_0_1_9"/>
<dbReference type="OrthoDB" id="9809796at2"/>
<dbReference type="UniPathway" id="UPA00219"/>
<dbReference type="Proteomes" id="UP000000543">
    <property type="component" value="Chromosome"/>
</dbReference>
<dbReference type="GO" id="GO:0005737">
    <property type="term" value="C:cytoplasm"/>
    <property type="evidence" value="ECO:0007669"/>
    <property type="project" value="UniProtKB-SubCell"/>
</dbReference>
<dbReference type="GO" id="GO:0005524">
    <property type="term" value="F:ATP binding"/>
    <property type="evidence" value="ECO:0007669"/>
    <property type="project" value="UniProtKB-UniRule"/>
</dbReference>
<dbReference type="GO" id="GO:0008764">
    <property type="term" value="F:UDP-N-acetylmuramoylalanine-D-glutamate ligase activity"/>
    <property type="evidence" value="ECO:0007669"/>
    <property type="project" value="UniProtKB-UniRule"/>
</dbReference>
<dbReference type="GO" id="GO:0051301">
    <property type="term" value="P:cell division"/>
    <property type="evidence" value="ECO:0007669"/>
    <property type="project" value="UniProtKB-KW"/>
</dbReference>
<dbReference type="GO" id="GO:0071555">
    <property type="term" value="P:cell wall organization"/>
    <property type="evidence" value="ECO:0007669"/>
    <property type="project" value="UniProtKB-KW"/>
</dbReference>
<dbReference type="GO" id="GO:0009252">
    <property type="term" value="P:peptidoglycan biosynthetic process"/>
    <property type="evidence" value="ECO:0007669"/>
    <property type="project" value="UniProtKB-UniRule"/>
</dbReference>
<dbReference type="GO" id="GO:0008360">
    <property type="term" value="P:regulation of cell shape"/>
    <property type="evidence" value="ECO:0007669"/>
    <property type="project" value="UniProtKB-KW"/>
</dbReference>
<dbReference type="Gene3D" id="3.90.190.20">
    <property type="entry name" value="Mur ligase, C-terminal domain"/>
    <property type="match status" value="1"/>
</dbReference>
<dbReference type="Gene3D" id="3.40.1190.10">
    <property type="entry name" value="Mur-like, catalytic domain"/>
    <property type="match status" value="1"/>
</dbReference>
<dbReference type="Gene3D" id="3.40.50.720">
    <property type="entry name" value="NAD(P)-binding Rossmann-like Domain"/>
    <property type="match status" value="1"/>
</dbReference>
<dbReference type="HAMAP" id="MF_00639">
    <property type="entry name" value="MurD"/>
    <property type="match status" value="1"/>
</dbReference>
<dbReference type="InterPro" id="IPR036565">
    <property type="entry name" value="Mur-like_cat_sf"/>
</dbReference>
<dbReference type="InterPro" id="IPR004101">
    <property type="entry name" value="Mur_ligase_C"/>
</dbReference>
<dbReference type="InterPro" id="IPR036615">
    <property type="entry name" value="Mur_ligase_C_dom_sf"/>
</dbReference>
<dbReference type="InterPro" id="IPR013221">
    <property type="entry name" value="Mur_ligase_cen"/>
</dbReference>
<dbReference type="InterPro" id="IPR005762">
    <property type="entry name" value="MurD"/>
</dbReference>
<dbReference type="NCBIfam" id="TIGR01087">
    <property type="entry name" value="murD"/>
    <property type="match status" value="1"/>
</dbReference>
<dbReference type="PANTHER" id="PTHR43692">
    <property type="entry name" value="UDP-N-ACETYLMURAMOYLALANINE--D-GLUTAMATE LIGASE"/>
    <property type="match status" value="1"/>
</dbReference>
<dbReference type="PANTHER" id="PTHR43692:SF1">
    <property type="entry name" value="UDP-N-ACETYLMURAMOYLALANINE--D-GLUTAMATE LIGASE"/>
    <property type="match status" value="1"/>
</dbReference>
<dbReference type="Pfam" id="PF02875">
    <property type="entry name" value="Mur_ligase_C"/>
    <property type="match status" value="1"/>
</dbReference>
<dbReference type="Pfam" id="PF08245">
    <property type="entry name" value="Mur_ligase_M"/>
    <property type="match status" value="1"/>
</dbReference>
<dbReference type="Pfam" id="PF21799">
    <property type="entry name" value="MurD-like_N"/>
    <property type="match status" value="1"/>
</dbReference>
<dbReference type="SUPFAM" id="SSF51984">
    <property type="entry name" value="MurCD N-terminal domain"/>
    <property type="match status" value="1"/>
</dbReference>
<dbReference type="SUPFAM" id="SSF53623">
    <property type="entry name" value="MurD-like peptide ligases, catalytic domain"/>
    <property type="match status" value="1"/>
</dbReference>
<dbReference type="SUPFAM" id="SSF53244">
    <property type="entry name" value="MurD-like peptide ligases, peptide-binding domain"/>
    <property type="match status" value="1"/>
</dbReference>
<proteinExistence type="inferred from homology"/>
<evidence type="ECO:0000255" key="1">
    <source>
        <dbReference type="HAMAP-Rule" id="MF_00639"/>
    </source>
</evidence>
<gene>
    <name evidence="1" type="primary">murD</name>
    <name type="ordered locus">SH1732</name>
</gene>
<feature type="chain" id="PRO_0000109092" description="UDP-N-acetylmuramoylalanine--D-glutamate ligase">
    <location>
        <begin position="1"/>
        <end position="449"/>
    </location>
</feature>
<feature type="binding site" evidence="1">
    <location>
        <begin position="118"/>
        <end position="124"/>
    </location>
    <ligand>
        <name>ATP</name>
        <dbReference type="ChEBI" id="CHEBI:30616"/>
    </ligand>
</feature>
<name>MURD_STAHJ</name>
<organism>
    <name type="scientific">Staphylococcus haemolyticus (strain JCSC1435)</name>
    <dbReference type="NCBI Taxonomy" id="279808"/>
    <lineage>
        <taxon>Bacteria</taxon>
        <taxon>Bacillati</taxon>
        <taxon>Bacillota</taxon>
        <taxon>Bacilli</taxon>
        <taxon>Bacillales</taxon>
        <taxon>Staphylococcaceae</taxon>
        <taxon>Staphylococcus</taxon>
    </lineage>
</organism>
<accession>Q4L5N4</accession>
<comment type="function">
    <text evidence="1">Cell wall formation. Catalyzes the addition of glutamate to the nucleotide precursor UDP-N-acetylmuramoyl-L-alanine (UMA).</text>
</comment>
<comment type="catalytic activity">
    <reaction evidence="1">
        <text>UDP-N-acetyl-alpha-D-muramoyl-L-alanine + D-glutamate + ATP = UDP-N-acetyl-alpha-D-muramoyl-L-alanyl-D-glutamate + ADP + phosphate + H(+)</text>
        <dbReference type="Rhea" id="RHEA:16429"/>
        <dbReference type="ChEBI" id="CHEBI:15378"/>
        <dbReference type="ChEBI" id="CHEBI:29986"/>
        <dbReference type="ChEBI" id="CHEBI:30616"/>
        <dbReference type="ChEBI" id="CHEBI:43474"/>
        <dbReference type="ChEBI" id="CHEBI:83898"/>
        <dbReference type="ChEBI" id="CHEBI:83900"/>
        <dbReference type="ChEBI" id="CHEBI:456216"/>
        <dbReference type="EC" id="6.3.2.9"/>
    </reaction>
</comment>
<comment type="pathway">
    <text evidence="1">Cell wall biogenesis; peptidoglycan biosynthesis.</text>
</comment>
<comment type="subcellular location">
    <subcellularLocation>
        <location evidence="1">Cytoplasm</location>
    </subcellularLocation>
</comment>
<comment type="similarity">
    <text evidence="1">Belongs to the MurCDEF family.</text>
</comment>
<sequence>MLNYTGLENKDVLVVGLAKSGYEAAKLLIKLGANVTVNDGKDLSQDPHAKDLEALGVKIVDGGHPLSLLDNEPIIVKNPGIPYTVSIIQEAYQRHLKILTEVELSYLISEAPIIAITGTNGKTTTSSLIGDMFKKSRLTGRLSGNIGYVASKVAQETSPNEYLITELSSFQLLGVEQYRPHIAIITNIYSAHLDYHETLENYQNAKKQIYKNQTENDYLICNYHQRHLIESENLKAKTLYFSTQQEVDGIYIKDGFIVYQGIRIINIDDLVLPGEHNLENILAAVLASILAGVPIKAIIDSLTTFSGIDHRLQYIGTNRTNKYYNDSKATNTLATQFALNSFKQPIVWLCGGLDRGNDFDELIPYMKNVRVMVVFGQTQEKFAKLGNSQGKLVVKATDIEDAVKKVQDVVEPNDVVLLSPACASWDQYKTFEERGERFIESFRAHLPSY</sequence>